<gene>
    <name type="primary">ZNF425</name>
    <name type="ORF">QccE-16628</name>
</gene>
<feature type="chain" id="PRO_0000234578" description="Zinc finger protein 425">
    <location>
        <begin position="1" status="less than"/>
        <end position="741"/>
    </location>
</feature>
<feature type="domain" description="KRAB" evidence="3">
    <location>
        <begin position="1" status="less than"/>
        <end position="69"/>
    </location>
</feature>
<feature type="zinc finger region" description="C2H2-type 1" evidence="2">
    <location>
        <begin position="179"/>
        <end position="201"/>
    </location>
</feature>
<feature type="zinc finger region" description="C2H2-type 2" evidence="2">
    <location>
        <begin position="235"/>
        <end position="257"/>
    </location>
</feature>
<feature type="zinc finger region" description="C2H2-type 3" evidence="2">
    <location>
        <begin position="263"/>
        <end position="285"/>
    </location>
</feature>
<feature type="zinc finger region" description="C2H2-type 4" evidence="2">
    <location>
        <begin position="291"/>
        <end position="313"/>
    </location>
</feature>
<feature type="zinc finger region" description="C2H2-type 5" evidence="2">
    <location>
        <begin position="319"/>
        <end position="341"/>
    </location>
</feature>
<feature type="zinc finger region" description="C2H2-type 6" evidence="2">
    <location>
        <begin position="347"/>
        <end position="369"/>
    </location>
</feature>
<feature type="zinc finger region" description="C2H2-type 7" evidence="2">
    <location>
        <begin position="375"/>
        <end position="397"/>
    </location>
</feature>
<feature type="zinc finger region" description="C2H2-type 8" evidence="2">
    <location>
        <begin position="403"/>
        <end position="425"/>
    </location>
</feature>
<feature type="zinc finger region" description="C2H2-type 9" evidence="2">
    <location>
        <begin position="431"/>
        <end position="453"/>
    </location>
</feature>
<feature type="zinc finger region" description="C2H2-type 10" evidence="2">
    <location>
        <begin position="459"/>
        <end position="481"/>
    </location>
</feature>
<feature type="zinc finger region" description="C2H2-type 11" evidence="2">
    <location>
        <begin position="487"/>
        <end position="509"/>
    </location>
</feature>
<feature type="zinc finger region" description="C2H2-type 12" evidence="2">
    <location>
        <begin position="515"/>
        <end position="537"/>
    </location>
</feature>
<feature type="zinc finger region" description="C2H2-type 13" evidence="2">
    <location>
        <begin position="543"/>
        <end position="565"/>
    </location>
</feature>
<feature type="zinc finger region" description="C2H2-type 14" evidence="2">
    <location>
        <begin position="571"/>
        <end position="593"/>
    </location>
</feature>
<feature type="zinc finger region" description="C2H2-type 15" evidence="2">
    <location>
        <begin position="599"/>
        <end position="621"/>
    </location>
</feature>
<feature type="zinc finger region" description="C2H2-type 16" evidence="2">
    <location>
        <begin position="627"/>
        <end position="649"/>
    </location>
</feature>
<feature type="zinc finger region" description="C2H2-type 17" evidence="2">
    <location>
        <begin position="655"/>
        <end position="677"/>
    </location>
</feature>
<feature type="zinc finger region" description="C2H2-type 18" evidence="2">
    <location>
        <begin position="683"/>
        <end position="705"/>
    </location>
</feature>
<feature type="zinc finger region" description="C2H2-type 19" evidence="2">
    <location>
        <begin position="711"/>
        <end position="733"/>
    </location>
</feature>
<feature type="region of interest" description="Disordered" evidence="4">
    <location>
        <begin position="67"/>
        <end position="86"/>
    </location>
</feature>
<feature type="region of interest" description="Disordered" evidence="4">
    <location>
        <begin position="128"/>
        <end position="169"/>
    </location>
</feature>
<feature type="compositionally biased region" description="Polar residues" evidence="4">
    <location>
        <begin position="132"/>
        <end position="151"/>
    </location>
</feature>
<feature type="compositionally biased region" description="Basic and acidic residues" evidence="4">
    <location>
        <begin position="153"/>
        <end position="168"/>
    </location>
</feature>
<feature type="non-terminal residue">
    <location>
        <position position="1"/>
    </location>
</feature>
<accession>Q9N003</accession>
<sequence>DDVALYFSGQEWEILEKWQKQMYKQEMKTNYQTLDSLGYAFSKPDLITWMEQGRMLFISEQGCLDKTRRTTSPPTDEQLDMKDTGKLPCFDHEGTLRTKEEDCRLNGPQKQDLGAALPGKERKILSARRDTFQSPSLQETEIPNKKVSITASDPDKKDLRHKPRETPGRLEIPTGPRCYSCYVCRKVFQVRRDLLKHKRSHSKSQLRRYPKYRNTSRGKSELRRTQRLLCQKKRFQCSECEKSYFLKGSLVTHQVVHTGQRPYPCPECDKTFRYRANLKKHLCLHRGERPFCCGECGRAFVQQCELTEHLRLHSGEKPFQCPQCDRCFRLKRGMKVHLSQHSGKRPFHCPECGRSFSRKAALKTHQRTHSEEKPFSCDECGRKFIYKIKLDEHIRVHTGEKPFSCPECNKSFRLKRSLKAHGLQHSGKRPFQCPECSRGFFWRNAMRAHQRLHSEQKPFPCAECGKRFTRPSKLACHTRVHDRQKEFPCGECKKTFSQQSRLTQHLKVHNTEKPFSCAECGRSFRRRAHLTEHTRLHSGEEPFQCPECDKSFSWKASMKFHQRMHRDEKPFACSECGKTYTHQSQLTEHLRLHSGEKPYQCPECQKTFRLKGNLKSHLLQHSGQKPFSCVMCGKSFTQQYRLTEHIRVHSGEKPFQCPECDKSYCIRGSLKVHLYTHSGERPFQCPECGKGFLQKRSLKAHLCLHSGERPFSCDECGRSFTYVGALKTHIAVHAKEKPSSL</sequence>
<organism>
    <name type="scientific">Macaca fascicularis</name>
    <name type="common">Crab-eating macaque</name>
    <name type="synonym">Cynomolgus monkey</name>
    <dbReference type="NCBI Taxonomy" id="9541"/>
    <lineage>
        <taxon>Eukaryota</taxon>
        <taxon>Metazoa</taxon>
        <taxon>Chordata</taxon>
        <taxon>Craniata</taxon>
        <taxon>Vertebrata</taxon>
        <taxon>Euteleostomi</taxon>
        <taxon>Mammalia</taxon>
        <taxon>Eutheria</taxon>
        <taxon>Euarchontoglires</taxon>
        <taxon>Primates</taxon>
        <taxon>Haplorrhini</taxon>
        <taxon>Catarrhini</taxon>
        <taxon>Cercopithecidae</taxon>
        <taxon>Cercopithecinae</taxon>
        <taxon>Macaca</taxon>
    </lineage>
</organism>
<comment type="function">
    <text evidence="1">Acts as a transcriptional repressor.</text>
</comment>
<comment type="subcellular location">
    <subcellularLocation>
        <location evidence="1">Nucleus</location>
    </subcellularLocation>
    <subcellularLocation>
        <location evidence="1">Cytoplasm</location>
    </subcellularLocation>
    <text evidence="1">Predominantly expressed in the nucleus.</text>
</comment>
<comment type="domain">
    <text evidence="1">The C2H2 domain is the main region responsible for the transcriprional repression.</text>
</comment>
<comment type="similarity">
    <text evidence="5">Belongs to the krueppel C2H2-type zinc-finger protein family.</text>
</comment>
<comment type="sequence caution" evidence="5">
    <conflict type="erroneous initiation">
        <sequence resource="EMBL-CDS" id="BAB03562"/>
    </conflict>
    <text>Truncated N-terminus.</text>
</comment>
<proteinExistence type="evidence at transcript level"/>
<reference key="1">
    <citation type="journal article" date="2001" name="Gene">
        <title>Assignment of 118 novel cDNAs of cynomolgus monkey brain to human chromosomes.</title>
        <authorList>
            <person name="Osada N."/>
            <person name="Hida M."/>
            <person name="Kususda J."/>
            <person name="Tanuma R."/>
            <person name="Iseki K."/>
            <person name="Hirata M."/>
            <person name="Suto Y."/>
            <person name="Hirai M."/>
            <person name="Terao K."/>
            <person name="Suzuki Y."/>
            <person name="Sugano S."/>
            <person name="Hashimoto K."/>
        </authorList>
    </citation>
    <scope>NUCLEOTIDE SEQUENCE [LARGE SCALE MRNA]</scope>
    <source>
        <tissue>Brain cortex</tissue>
    </source>
</reference>
<reference key="2">
    <citation type="journal article" date="2001" name="Gene">
        <authorList>
            <person name="Osada N."/>
            <person name="Hida M."/>
            <person name="Kusuda J."/>
            <person name="Tanuma R."/>
            <person name="Iseki K."/>
            <person name="Hirata M."/>
            <person name="Suto Y."/>
            <person name="Hirai M."/>
            <person name="Terao K."/>
            <person name="Suzuki Y."/>
            <person name="Sugano S."/>
            <person name="Hashimoto K."/>
            <person name="Kususda J."/>
        </authorList>
    </citation>
    <scope>ERRATUM OF PUBMED:11574149</scope>
</reference>
<protein>
    <recommendedName>
        <fullName>Zinc finger protein 425</fullName>
    </recommendedName>
</protein>
<keyword id="KW-0963">Cytoplasm</keyword>
<keyword id="KW-0238">DNA-binding</keyword>
<keyword id="KW-0479">Metal-binding</keyword>
<keyword id="KW-0539">Nucleus</keyword>
<keyword id="KW-1185">Reference proteome</keyword>
<keyword id="KW-0677">Repeat</keyword>
<keyword id="KW-0804">Transcription</keyword>
<keyword id="KW-0805">Transcription regulation</keyword>
<keyword id="KW-0862">Zinc</keyword>
<keyword id="KW-0863">Zinc-finger</keyword>
<name>ZN425_MACFA</name>
<dbReference type="EMBL" id="AB046644">
    <property type="protein sequence ID" value="BAB03562.1"/>
    <property type="status" value="ALT_INIT"/>
    <property type="molecule type" value="mRNA"/>
</dbReference>
<dbReference type="SMR" id="Q9N003"/>
<dbReference type="STRING" id="9541.ENSMFAP00000018166"/>
<dbReference type="eggNOG" id="KOG1721">
    <property type="taxonomic scope" value="Eukaryota"/>
</dbReference>
<dbReference type="Proteomes" id="UP000233100">
    <property type="component" value="Unplaced"/>
</dbReference>
<dbReference type="GO" id="GO:0005737">
    <property type="term" value="C:cytoplasm"/>
    <property type="evidence" value="ECO:0000250"/>
    <property type="project" value="UniProtKB"/>
</dbReference>
<dbReference type="GO" id="GO:0005634">
    <property type="term" value="C:nucleus"/>
    <property type="evidence" value="ECO:0000250"/>
    <property type="project" value="UniProtKB"/>
</dbReference>
<dbReference type="GO" id="GO:0003677">
    <property type="term" value="F:DNA binding"/>
    <property type="evidence" value="ECO:0007669"/>
    <property type="project" value="UniProtKB-KW"/>
</dbReference>
<dbReference type="GO" id="GO:0008270">
    <property type="term" value="F:zinc ion binding"/>
    <property type="evidence" value="ECO:0007669"/>
    <property type="project" value="UniProtKB-KW"/>
</dbReference>
<dbReference type="GO" id="GO:0045892">
    <property type="term" value="P:negative regulation of DNA-templated transcription"/>
    <property type="evidence" value="ECO:0000250"/>
    <property type="project" value="UniProtKB"/>
</dbReference>
<dbReference type="CDD" id="cd07765">
    <property type="entry name" value="KRAB_A-box"/>
    <property type="match status" value="1"/>
</dbReference>
<dbReference type="FunFam" id="3.30.160.60:FF:000151">
    <property type="entry name" value="Zinc finger and SCAN domain-containing 21"/>
    <property type="match status" value="3"/>
</dbReference>
<dbReference type="FunFam" id="3.30.160.60:FF:001596">
    <property type="entry name" value="Zinc finger protein 1048"/>
    <property type="match status" value="1"/>
</dbReference>
<dbReference type="FunFam" id="3.30.160.60:FF:000189">
    <property type="entry name" value="zinc finger protein 133 isoform X1"/>
    <property type="match status" value="2"/>
</dbReference>
<dbReference type="FunFam" id="3.30.160.60:FF:001064">
    <property type="entry name" value="Zinc finger protein 425"/>
    <property type="match status" value="1"/>
</dbReference>
<dbReference type="FunFam" id="3.30.160.60:FF:001552">
    <property type="entry name" value="Zinc finger protein 425"/>
    <property type="match status" value="1"/>
</dbReference>
<dbReference type="FunFam" id="3.30.160.60:FF:001744">
    <property type="entry name" value="Zinc finger protein 425"/>
    <property type="match status" value="1"/>
</dbReference>
<dbReference type="FunFam" id="3.30.160.60:FF:001785">
    <property type="entry name" value="Zinc finger protein 425"/>
    <property type="match status" value="1"/>
</dbReference>
<dbReference type="FunFam" id="3.30.160.60:FF:001815">
    <property type="entry name" value="Zinc finger protein 425"/>
    <property type="match status" value="1"/>
</dbReference>
<dbReference type="FunFam" id="3.30.160.60:FF:001870">
    <property type="entry name" value="Zinc finger protein 425"/>
    <property type="match status" value="1"/>
</dbReference>
<dbReference type="FunFam" id="3.30.160.60:FF:001908">
    <property type="entry name" value="Zinc finger protein 425"/>
    <property type="match status" value="1"/>
</dbReference>
<dbReference type="FunFam" id="3.30.160.60:FF:001909">
    <property type="entry name" value="Zinc finger protein 425"/>
    <property type="match status" value="1"/>
</dbReference>
<dbReference type="FunFam" id="3.30.160.60:FF:001981">
    <property type="entry name" value="Zinc finger protein 425"/>
    <property type="match status" value="1"/>
</dbReference>
<dbReference type="FunFam" id="3.30.160.60:FF:001276">
    <property type="entry name" value="zinc finger protein 425"/>
    <property type="match status" value="2"/>
</dbReference>
<dbReference type="FunFam" id="3.30.160.60:FF:000562">
    <property type="entry name" value="Zinc finger protein 786"/>
    <property type="match status" value="1"/>
</dbReference>
<dbReference type="Gene3D" id="6.10.140.140">
    <property type="match status" value="1"/>
</dbReference>
<dbReference type="Gene3D" id="3.30.160.60">
    <property type="entry name" value="Classic Zinc Finger"/>
    <property type="match status" value="18"/>
</dbReference>
<dbReference type="InterPro" id="IPR001909">
    <property type="entry name" value="KRAB"/>
</dbReference>
<dbReference type="InterPro" id="IPR036051">
    <property type="entry name" value="KRAB_dom_sf"/>
</dbReference>
<dbReference type="InterPro" id="IPR050826">
    <property type="entry name" value="Krueppel_C2H2_ZnFinger"/>
</dbReference>
<dbReference type="InterPro" id="IPR036236">
    <property type="entry name" value="Znf_C2H2_sf"/>
</dbReference>
<dbReference type="InterPro" id="IPR013087">
    <property type="entry name" value="Znf_C2H2_type"/>
</dbReference>
<dbReference type="PANTHER" id="PTHR24377">
    <property type="entry name" value="IP01015P-RELATED"/>
    <property type="match status" value="1"/>
</dbReference>
<dbReference type="Pfam" id="PF01352">
    <property type="entry name" value="KRAB"/>
    <property type="match status" value="1"/>
</dbReference>
<dbReference type="Pfam" id="PF00096">
    <property type="entry name" value="zf-C2H2"/>
    <property type="match status" value="14"/>
</dbReference>
<dbReference type="SMART" id="SM00349">
    <property type="entry name" value="KRAB"/>
    <property type="match status" value="1"/>
</dbReference>
<dbReference type="SMART" id="SM00355">
    <property type="entry name" value="ZnF_C2H2"/>
    <property type="match status" value="19"/>
</dbReference>
<dbReference type="SUPFAM" id="SSF57667">
    <property type="entry name" value="beta-beta-alpha zinc fingers"/>
    <property type="match status" value="11"/>
</dbReference>
<dbReference type="SUPFAM" id="SSF109640">
    <property type="entry name" value="KRAB domain (Kruppel-associated box)"/>
    <property type="match status" value="1"/>
</dbReference>
<dbReference type="PROSITE" id="PS50805">
    <property type="entry name" value="KRAB"/>
    <property type="match status" value="1"/>
</dbReference>
<dbReference type="PROSITE" id="PS00028">
    <property type="entry name" value="ZINC_FINGER_C2H2_1"/>
    <property type="match status" value="19"/>
</dbReference>
<dbReference type="PROSITE" id="PS50157">
    <property type="entry name" value="ZINC_FINGER_C2H2_2"/>
    <property type="match status" value="19"/>
</dbReference>
<evidence type="ECO:0000250" key="1"/>
<evidence type="ECO:0000255" key="2">
    <source>
        <dbReference type="PROSITE-ProRule" id="PRU00042"/>
    </source>
</evidence>
<evidence type="ECO:0000255" key="3">
    <source>
        <dbReference type="PROSITE-ProRule" id="PRU00119"/>
    </source>
</evidence>
<evidence type="ECO:0000256" key="4">
    <source>
        <dbReference type="SAM" id="MobiDB-lite"/>
    </source>
</evidence>
<evidence type="ECO:0000305" key="5"/>